<organism>
    <name type="scientific">Petrotoga mobilis (strain DSM 10674 / SJ95)</name>
    <dbReference type="NCBI Taxonomy" id="403833"/>
    <lineage>
        <taxon>Bacteria</taxon>
        <taxon>Thermotogati</taxon>
        <taxon>Thermotogota</taxon>
        <taxon>Thermotogae</taxon>
        <taxon>Petrotogales</taxon>
        <taxon>Petrotogaceae</taxon>
        <taxon>Petrotoga</taxon>
    </lineage>
</organism>
<sequence length="298" mass="34268">MYIPIITGGKSKEREISLTSAKNVFNSISNLGYKPVILDLIDDDFINKIQNYKFAFNVVHGDYGEDGRLPSLLEILGIDYTCSNPETCIATYDKFIFYSLFKNYIQMPQTTLTNKLILPPFEYPFIIKPRKSGSSKGVYIIHNENEYKFYLEKDLKEFQEVLVQEYIKGREITISYIQKNEEFILLPILEIIPKKEFYDYEAKYTNGLTELKPQLNSPEKIIQKINEIGNHVMQTLTFKDMFRIDAILKDDEVYVLEINTVPGLTELSDLPTSALAAGISFDELINIIIKNHVARVAG</sequence>
<keyword id="KW-0067">ATP-binding</keyword>
<keyword id="KW-0133">Cell shape</keyword>
<keyword id="KW-0961">Cell wall biogenesis/degradation</keyword>
<keyword id="KW-0963">Cytoplasm</keyword>
<keyword id="KW-0436">Ligase</keyword>
<keyword id="KW-0460">Magnesium</keyword>
<keyword id="KW-0464">Manganese</keyword>
<keyword id="KW-0479">Metal-binding</keyword>
<keyword id="KW-0547">Nucleotide-binding</keyword>
<keyword id="KW-0573">Peptidoglycan synthesis</keyword>
<gene>
    <name evidence="2" type="primary">ddl</name>
    <name type="ordered locus">Pmob_1643</name>
</gene>
<name>DDL_PETMO</name>
<proteinExistence type="inferred from homology"/>
<protein>
    <recommendedName>
        <fullName evidence="2">D-alanine--D-alanine ligase</fullName>
        <ecNumber evidence="2">6.3.2.4</ecNumber>
    </recommendedName>
    <alternativeName>
        <fullName evidence="2">D-Ala-D-Ala ligase</fullName>
    </alternativeName>
    <alternativeName>
        <fullName evidence="2">D-alanylalanine synthetase</fullName>
    </alternativeName>
</protein>
<comment type="function">
    <text evidence="2">Cell wall formation.</text>
</comment>
<comment type="catalytic activity">
    <reaction evidence="2">
        <text>2 D-alanine + ATP = D-alanyl-D-alanine + ADP + phosphate + H(+)</text>
        <dbReference type="Rhea" id="RHEA:11224"/>
        <dbReference type="ChEBI" id="CHEBI:15378"/>
        <dbReference type="ChEBI" id="CHEBI:30616"/>
        <dbReference type="ChEBI" id="CHEBI:43474"/>
        <dbReference type="ChEBI" id="CHEBI:57416"/>
        <dbReference type="ChEBI" id="CHEBI:57822"/>
        <dbReference type="ChEBI" id="CHEBI:456216"/>
        <dbReference type="EC" id="6.3.2.4"/>
    </reaction>
</comment>
<comment type="cofactor">
    <cofactor evidence="1">
        <name>Mg(2+)</name>
        <dbReference type="ChEBI" id="CHEBI:18420"/>
    </cofactor>
    <cofactor evidence="1">
        <name>Mn(2+)</name>
        <dbReference type="ChEBI" id="CHEBI:29035"/>
    </cofactor>
    <text evidence="1">Binds 2 magnesium or manganese ions per subunit.</text>
</comment>
<comment type="pathway">
    <text evidence="2">Cell wall biogenesis; peptidoglycan biosynthesis.</text>
</comment>
<comment type="subcellular location">
    <subcellularLocation>
        <location evidence="2">Cytoplasm</location>
    </subcellularLocation>
</comment>
<comment type="similarity">
    <text evidence="2">Belongs to the D-alanine--D-alanine ligase family.</text>
</comment>
<evidence type="ECO:0000250" key="1"/>
<evidence type="ECO:0000255" key="2">
    <source>
        <dbReference type="HAMAP-Rule" id="MF_00047"/>
    </source>
</evidence>
<dbReference type="EC" id="6.3.2.4" evidence="2"/>
<dbReference type="EMBL" id="CP000879">
    <property type="protein sequence ID" value="ABX32337.1"/>
    <property type="molecule type" value="Genomic_DNA"/>
</dbReference>
<dbReference type="RefSeq" id="WP_012209434.1">
    <property type="nucleotide sequence ID" value="NC_010003.1"/>
</dbReference>
<dbReference type="SMR" id="A9BI46"/>
<dbReference type="STRING" id="403833.Pmob_1643"/>
<dbReference type="KEGG" id="pmo:Pmob_1643"/>
<dbReference type="eggNOG" id="COG1181">
    <property type="taxonomic scope" value="Bacteria"/>
</dbReference>
<dbReference type="HOGENOM" id="CLU_039268_1_1_0"/>
<dbReference type="OrthoDB" id="9813261at2"/>
<dbReference type="UniPathway" id="UPA00219"/>
<dbReference type="Proteomes" id="UP000000789">
    <property type="component" value="Chromosome"/>
</dbReference>
<dbReference type="GO" id="GO:0005737">
    <property type="term" value="C:cytoplasm"/>
    <property type="evidence" value="ECO:0007669"/>
    <property type="project" value="UniProtKB-SubCell"/>
</dbReference>
<dbReference type="GO" id="GO:0005524">
    <property type="term" value="F:ATP binding"/>
    <property type="evidence" value="ECO:0007669"/>
    <property type="project" value="UniProtKB-KW"/>
</dbReference>
<dbReference type="GO" id="GO:0008716">
    <property type="term" value="F:D-alanine-D-alanine ligase activity"/>
    <property type="evidence" value="ECO:0007669"/>
    <property type="project" value="UniProtKB-UniRule"/>
</dbReference>
<dbReference type="GO" id="GO:0046872">
    <property type="term" value="F:metal ion binding"/>
    <property type="evidence" value="ECO:0007669"/>
    <property type="project" value="UniProtKB-KW"/>
</dbReference>
<dbReference type="GO" id="GO:0071555">
    <property type="term" value="P:cell wall organization"/>
    <property type="evidence" value="ECO:0007669"/>
    <property type="project" value="UniProtKB-KW"/>
</dbReference>
<dbReference type="GO" id="GO:0009252">
    <property type="term" value="P:peptidoglycan biosynthetic process"/>
    <property type="evidence" value="ECO:0007669"/>
    <property type="project" value="UniProtKB-UniRule"/>
</dbReference>
<dbReference type="GO" id="GO:0008360">
    <property type="term" value="P:regulation of cell shape"/>
    <property type="evidence" value="ECO:0007669"/>
    <property type="project" value="UniProtKB-KW"/>
</dbReference>
<dbReference type="Gene3D" id="3.40.50.20">
    <property type="match status" value="1"/>
</dbReference>
<dbReference type="Gene3D" id="3.30.1490.20">
    <property type="entry name" value="ATP-grasp fold, A domain"/>
    <property type="match status" value="1"/>
</dbReference>
<dbReference type="Gene3D" id="3.30.470.20">
    <property type="entry name" value="ATP-grasp fold, B domain"/>
    <property type="match status" value="1"/>
</dbReference>
<dbReference type="HAMAP" id="MF_00047">
    <property type="entry name" value="Dala_Dala_lig"/>
    <property type="match status" value="1"/>
</dbReference>
<dbReference type="InterPro" id="IPR011761">
    <property type="entry name" value="ATP-grasp"/>
</dbReference>
<dbReference type="InterPro" id="IPR013815">
    <property type="entry name" value="ATP_grasp_subdomain_1"/>
</dbReference>
<dbReference type="InterPro" id="IPR000291">
    <property type="entry name" value="D-Ala_lig_Van_CS"/>
</dbReference>
<dbReference type="InterPro" id="IPR005905">
    <property type="entry name" value="D_ala_D_ala"/>
</dbReference>
<dbReference type="InterPro" id="IPR011095">
    <property type="entry name" value="Dala_Dala_lig_C"/>
</dbReference>
<dbReference type="InterPro" id="IPR016185">
    <property type="entry name" value="PreATP-grasp_dom_sf"/>
</dbReference>
<dbReference type="PANTHER" id="PTHR23132">
    <property type="entry name" value="D-ALANINE--D-ALANINE LIGASE"/>
    <property type="match status" value="1"/>
</dbReference>
<dbReference type="PANTHER" id="PTHR23132:SF23">
    <property type="entry name" value="D-ALANINE--D-ALANINE LIGASE B"/>
    <property type="match status" value="1"/>
</dbReference>
<dbReference type="Pfam" id="PF07478">
    <property type="entry name" value="Dala_Dala_lig_C"/>
    <property type="match status" value="1"/>
</dbReference>
<dbReference type="PIRSF" id="PIRSF039102">
    <property type="entry name" value="Ddl/VanB"/>
    <property type="match status" value="1"/>
</dbReference>
<dbReference type="SUPFAM" id="SSF56059">
    <property type="entry name" value="Glutathione synthetase ATP-binding domain-like"/>
    <property type="match status" value="1"/>
</dbReference>
<dbReference type="SUPFAM" id="SSF52440">
    <property type="entry name" value="PreATP-grasp domain"/>
    <property type="match status" value="1"/>
</dbReference>
<dbReference type="PROSITE" id="PS50975">
    <property type="entry name" value="ATP_GRASP"/>
    <property type="match status" value="1"/>
</dbReference>
<dbReference type="PROSITE" id="PS00843">
    <property type="entry name" value="DALA_DALA_LIGASE_1"/>
    <property type="match status" value="1"/>
</dbReference>
<accession>A9BI46</accession>
<feature type="chain" id="PRO_0000341149" description="D-alanine--D-alanine ligase">
    <location>
        <begin position="1"/>
        <end position="298"/>
    </location>
</feature>
<feature type="domain" description="ATP-grasp" evidence="2">
    <location>
        <begin position="97"/>
        <end position="290"/>
    </location>
</feature>
<feature type="binding site" evidence="2">
    <location>
        <begin position="124"/>
        <end position="173"/>
    </location>
    <ligand>
        <name>ATP</name>
        <dbReference type="ChEBI" id="CHEBI:30616"/>
    </ligand>
</feature>
<feature type="binding site" evidence="2">
    <location>
        <position position="245"/>
    </location>
    <ligand>
        <name>Mg(2+)</name>
        <dbReference type="ChEBI" id="CHEBI:18420"/>
        <label>1</label>
    </ligand>
</feature>
<feature type="binding site" evidence="2">
    <location>
        <position position="257"/>
    </location>
    <ligand>
        <name>Mg(2+)</name>
        <dbReference type="ChEBI" id="CHEBI:18420"/>
        <label>1</label>
    </ligand>
</feature>
<feature type="binding site" evidence="2">
    <location>
        <position position="257"/>
    </location>
    <ligand>
        <name>Mg(2+)</name>
        <dbReference type="ChEBI" id="CHEBI:18420"/>
        <label>2</label>
    </ligand>
</feature>
<feature type="binding site" evidence="2">
    <location>
        <position position="259"/>
    </location>
    <ligand>
        <name>Mg(2+)</name>
        <dbReference type="ChEBI" id="CHEBI:18420"/>
        <label>2</label>
    </ligand>
</feature>
<reference key="1">
    <citation type="submission" date="2007-11" db="EMBL/GenBank/DDBJ databases">
        <title>Complete sequence of Petroga mobilis SJ95.</title>
        <authorList>
            <consortium name="US DOE Joint Genome Institute"/>
            <person name="Copeland A."/>
            <person name="Lucas S."/>
            <person name="Lapidus A."/>
            <person name="Barry K."/>
            <person name="Glavina del Rio T."/>
            <person name="Dalin E."/>
            <person name="Tice H."/>
            <person name="Pitluck S."/>
            <person name="Meincke L."/>
            <person name="Brettin T."/>
            <person name="Bruce D."/>
            <person name="Detter J.C."/>
            <person name="Han C."/>
            <person name="Kuske C.R."/>
            <person name="Schmutz J."/>
            <person name="Larimer F."/>
            <person name="Land M."/>
            <person name="Hauser L."/>
            <person name="Kyrpides N."/>
            <person name="Mikhailova N."/>
            <person name="Noll K."/>
            <person name="Richardson P."/>
        </authorList>
    </citation>
    <scope>NUCLEOTIDE SEQUENCE [LARGE SCALE GENOMIC DNA]</scope>
    <source>
        <strain>DSM 10674 / SJ95</strain>
    </source>
</reference>